<accession>Q5T7N8</accession>
<accession>Q5VSL6</accession>
<reference key="1">
    <citation type="journal article" date="2004" name="Nature">
        <title>DNA sequence and analysis of human chromosome 9.</title>
        <authorList>
            <person name="Humphray S.J."/>
            <person name="Oliver K."/>
            <person name="Hunt A.R."/>
            <person name="Plumb R.W."/>
            <person name="Loveland J.E."/>
            <person name="Howe K.L."/>
            <person name="Andrews T.D."/>
            <person name="Searle S."/>
            <person name="Hunt S.E."/>
            <person name="Scott C.E."/>
            <person name="Jones M.C."/>
            <person name="Ainscough R."/>
            <person name="Almeida J.P."/>
            <person name="Ambrose K.D."/>
            <person name="Ashwell R.I.S."/>
            <person name="Babbage A.K."/>
            <person name="Babbage S."/>
            <person name="Bagguley C.L."/>
            <person name="Bailey J."/>
            <person name="Banerjee R."/>
            <person name="Barker D.J."/>
            <person name="Barlow K.F."/>
            <person name="Bates K."/>
            <person name="Beasley H."/>
            <person name="Beasley O."/>
            <person name="Bird C.P."/>
            <person name="Bray-Allen S."/>
            <person name="Brown A.J."/>
            <person name="Brown J.Y."/>
            <person name="Burford D."/>
            <person name="Burrill W."/>
            <person name="Burton J."/>
            <person name="Carder C."/>
            <person name="Carter N.P."/>
            <person name="Chapman J.C."/>
            <person name="Chen Y."/>
            <person name="Clarke G."/>
            <person name="Clark S.Y."/>
            <person name="Clee C.M."/>
            <person name="Clegg S."/>
            <person name="Collier R.E."/>
            <person name="Corby N."/>
            <person name="Crosier M."/>
            <person name="Cummings A.T."/>
            <person name="Davies J."/>
            <person name="Dhami P."/>
            <person name="Dunn M."/>
            <person name="Dutta I."/>
            <person name="Dyer L.W."/>
            <person name="Earthrowl M.E."/>
            <person name="Faulkner L."/>
            <person name="Fleming C.J."/>
            <person name="Frankish A."/>
            <person name="Frankland J.A."/>
            <person name="French L."/>
            <person name="Fricker D.G."/>
            <person name="Garner P."/>
            <person name="Garnett J."/>
            <person name="Ghori J."/>
            <person name="Gilbert J.G.R."/>
            <person name="Glison C."/>
            <person name="Grafham D.V."/>
            <person name="Gribble S."/>
            <person name="Griffiths C."/>
            <person name="Griffiths-Jones S."/>
            <person name="Grocock R."/>
            <person name="Guy J."/>
            <person name="Hall R.E."/>
            <person name="Hammond S."/>
            <person name="Harley J.L."/>
            <person name="Harrison E.S.I."/>
            <person name="Hart E.A."/>
            <person name="Heath P.D."/>
            <person name="Henderson C.D."/>
            <person name="Hopkins B.L."/>
            <person name="Howard P.J."/>
            <person name="Howden P.J."/>
            <person name="Huckle E."/>
            <person name="Johnson C."/>
            <person name="Johnson D."/>
            <person name="Joy A.A."/>
            <person name="Kay M."/>
            <person name="Keenan S."/>
            <person name="Kershaw J.K."/>
            <person name="Kimberley A.M."/>
            <person name="King A."/>
            <person name="Knights A."/>
            <person name="Laird G.K."/>
            <person name="Langford C."/>
            <person name="Lawlor S."/>
            <person name="Leongamornlert D.A."/>
            <person name="Leversha M."/>
            <person name="Lloyd C."/>
            <person name="Lloyd D.M."/>
            <person name="Lovell J."/>
            <person name="Martin S."/>
            <person name="Mashreghi-Mohammadi M."/>
            <person name="Matthews L."/>
            <person name="McLaren S."/>
            <person name="McLay K.E."/>
            <person name="McMurray A."/>
            <person name="Milne S."/>
            <person name="Nickerson T."/>
            <person name="Nisbett J."/>
            <person name="Nordsiek G."/>
            <person name="Pearce A.V."/>
            <person name="Peck A.I."/>
            <person name="Porter K.M."/>
            <person name="Pandian R."/>
            <person name="Pelan S."/>
            <person name="Phillimore B."/>
            <person name="Povey S."/>
            <person name="Ramsey Y."/>
            <person name="Rand V."/>
            <person name="Scharfe M."/>
            <person name="Sehra H.K."/>
            <person name="Shownkeen R."/>
            <person name="Sims S.K."/>
            <person name="Skuce C.D."/>
            <person name="Smith M."/>
            <person name="Steward C.A."/>
            <person name="Swarbreck D."/>
            <person name="Sycamore N."/>
            <person name="Tester J."/>
            <person name="Thorpe A."/>
            <person name="Tracey A."/>
            <person name="Tromans A."/>
            <person name="Thomas D.W."/>
            <person name="Wall M."/>
            <person name="Wallis J.M."/>
            <person name="West A.P."/>
            <person name="Whitehead S.L."/>
            <person name="Willey D.L."/>
            <person name="Williams S.A."/>
            <person name="Wilming L."/>
            <person name="Wray P.W."/>
            <person name="Young L."/>
            <person name="Ashurst J.L."/>
            <person name="Coulson A."/>
            <person name="Blocker H."/>
            <person name="Durbin R.M."/>
            <person name="Sulston J.E."/>
            <person name="Hubbard T."/>
            <person name="Jackson M.J."/>
            <person name="Bentley D.R."/>
            <person name="Beck S."/>
            <person name="Rogers J."/>
            <person name="Dunham I."/>
        </authorList>
    </citation>
    <scope>NUCLEOTIDE SEQUENCE [LARGE SCALE GENOMIC DNA]</scope>
</reference>
<proteinExistence type="inferred from homology"/>
<keyword id="KW-1185">Reference proteome</keyword>
<organism>
    <name type="scientific">Homo sapiens</name>
    <name type="common">Human</name>
    <dbReference type="NCBI Taxonomy" id="9606"/>
    <lineage>
        <taxon>Eukaryota</taxon>
        <taxon>Metazoa</taxon>
        <taxon>Chordata</taxon>
        <taxon>Craniata</taxon>
        <taxon>Vertebrata</taxon>
        <taxon>Euteleostomi</taxon>
        <taxon>Mammalia</taxon>
        <taxon>Eutheria</taxon>
        <taxon>Euarchontoglires</taxon>
        <taxon>Primates</taxon>
        <taxon>Haplorrhini</taxon>
        <taxon>Catarrhini</taxon>
        <taxon>Hominidae</taxon>
        <taxon>Homo</taxon>
    </lineage>
</organism>
<dbReference type="EMBL" id="AL773537">
    <property type="protein sequence ID" value="CAH71857.1"/>
    <property type="molecule type" value="Genomic_DNA"/>
</dbReference>
<dbReference type="EMBL" id="AL162731">
    <property type="status" value="NOT_ANNOTATED_CDS"/>
    <property type="molecule type" value="Genomic_DNA"/>
</dbReference>
<dbReference type="SMR" id="Q5T7N8"/>
<dbReference type="GlyGen" id="Q5T7N8">
    <property type="glycosylation" value="1 site, 1 O-linked glycan (1 site)"/>
</dbReference>
<dbReference type="BioMuta" id="HGNC:32015"/>
<dbReference type="DMDM" id="190359334"/>
<dbReference type="jPOST" id="Q5T7N8"/>
<dbReference type="MassIVE" id="Q5T7N8"/>
<dbReference type="ProteomicsDB" id="64672"/>
<dbReference type="AGR" id="HGNC:32015"/>
<dbReference type="GeneCards" id="FAM27D1"/>
<dbReference type="HGNC" id="HGNC:32015">
    <property type="gene designation" value="FAM27D1"/>
</dbReference>
<dbReference type="neXtProt" id="NX_Q5T7N8"/>
<dbReference type="InParanoid" id="Q5T7N8"/>
<dbReference type="PAN-GO" id="Q5T7N8">
    <property type="GO annotations" value="0 GO annotations based on evolutionary models"/>
</dbReference>
<dbReference type="Pharos" id="Q5T7N8">
    <property type="development level" value="Tdark"/>
</dbReference>
<dbReference type="PRO" id="PR:Q5T7N8"/>
<dbReference type="Proteomes" id="UP000005640">
    <property type="component" value="Unplaced"/>
</dbReference>
<dbReference type="RNAct" id="Q5T7N8">
    <property type="molecule type" value="protein"/>
</dbReference>
<dbReference type="InterPro" id="IPR031672">
    <property type="entry name" value="FAM27D/FAM27E"/>
</dbReference>
<dbReference type="Pfam" id="PF15832">
    <property type="entry name" value="FAM27"/>
    <property type="match status" value="1"/>
</dbReference>
<name>F27D1_HUMAN</name>
<comment type="similarity">
    <text evidence="2">Belongs to the FAM27 family.</text>
</comment>
<evidence type="ECO:0000256" key="1">
    <source>
        <dbReference type="SAM" id="MobiDB-lite"/>
    </source>
</evidence>
<evidence type="ECO:0000305" key="2"/>
<feature type="chain" id="PRO_0000340731" description="Protein FAM27D1">
    <location>
        <begin position="1"/>
        <end position="215"/>
    </location>
</feature>
<feature type="region of interest" description="Disordered" evidence="1">
    <location>
        <begin position="74"/>
        <end position="172"/>
    </location>
</feature>
<feature type="compositionally biased region" description="Basic and acidic residues" evidence="1">
    <location>
        <begin position="87"/>
        <end position="108"/>
    </location>
</feature>
<feature type="compositionally biased region" description="Basic residues" evidence="1">
    <location>
        <begin position="109"/>
        <end position="122"/>
    </location>
</feature>
<feature type="compositionally biased region" description="Basic and acidic residues" evidence="1">
    <location>
        <begin position="123"/>
        <end position="139"/>
    </location>
</feature>
<feature type="compositionally biased region" description="Basic and acidic residues" evidence="1">
    <location>
        <begin position="149"/>
        <end position="162"/>
    </location>
</feature>
<feature type="compositionally biased region" description="Polar residues" evidence="1">
    <location>
        <begin position="163"/>
        <end position="172"/>
    </location>
</feature>
<feature type="sequence conflict" description="In Ref. 1; CAH71857." evidence="2" ref="1">
    <original>H</original>
    <variation>Q</variation>
    <location>
        <position position="123"/>
    </location>
</feature>
<gene>
    <name type="primary">FAM27D1</name>
</gene>
<sequence>MLEKRLLRMGMRLQLLRDRRISSRGPGLHRAKADPQQQKRLTTGLMTQAETQKEAQQRQAAMRKTALWHTGHLQPKTHTHTGMHTQTHRERERNTQRLRDRERRENGRHTHRHTHTLTHTHTHRDTHTASYRRGIETHTTRQPLRLRGSAHDENDPRVREQPRGTQADLSSRSRMAARLLGRLTPTNTVRAGLRLGSRAASPDPAWGFLIVVGPL</sequence>
<protein>
    <recommendedName>
        <fullName>Protein FAM27D1</fullName>
    </recommendedName>
</protein>